<evidence type="ECO:0000255" key="1">
    <source>
        <dbReference type="HAMAP-Rule" id="MF_00652"/>
    </source>
</evidence>
<name>Y3824_SACD2</name>
<sequence>MLIVISPAKNLDYDTPMPKVKTTKAAMLEDSAELIEGLKQLAPQDVSKLMHISDKLGTLNYDRFQSWSLTFTKANARPAVLAFNGDVYVGLDAYSFTDEDFAFAQDHLRILSGLYGALRPLDLMQPYRLEMGTKFANNRGKDLYAFWGSKITDALNKQLKKVGSETVVNLASNEYFKSVKPKALNGEIITPVFKEWKDGKYKIISFFAKKARGLMSAYIIKNKLTQVEQLKSFDWDGYTFNKAMSDGSELVFTRKQ</sequence>
<feature type="chain" id="PRO_0000262053" description="UPF0246 protein Sde_3824">
    <location>
        <begin position="1"/>
        <end position="256"/>
    </location>
</feature>
<proteinExistence type="inferred from homology"/>
<accession>Q21E00</accession>
<organism>
    <name type="scientific">Saccharophagus degradans (strain 2-40 / ATCC 43961 / DSM 17024)</name>
    <dbReference type="NCBI Taxonomy" id="203122"/>
    <lineage>
        <taxon>Bacteria</taxon>
        <taxon>Pseudomonadati</taxon>
        <taxon>Pseudomonadota</taxon>
        <taxon>Gammaproteobacteria</taxon>
        <taxon>Cellvibrionales</taxon>
        <taxon>Cellvibrionaceae</taxon>
        <taxon>Saccharophagus</taxon>
    </lineage>
</organism>
<dbReference type="EMBL" id="CP000282">
    <property type="protein sequence ID" value="ABD83079.1"/>
    <property type="molecule type" value="Genomic_DNA"/>
</dbReference>
<dbReference type="RefSeq" id="WP_011470294.1">
    <property type="nucleotide sequence ID" value="NC_007912.1"/>
</dbReference>
<dbReference type="SMR" id="Q21E00"/>
<dbReference type="STRING" id="203122.Sde_3824"/>
<dbReference type="GeneID" id="98615425"/>
<dbReference type="KEGG" id="sde:Sde_3824"/>
<dbReference type="eggNOG" id="COG3022">
    <property type="taxonomic scope" value="Bacteria"/>
</dbReference>
<dbReference type="HOGENOM" id="CLU_061989_0_0_6"/>
<dbReference type="OrthoDB" id="9777133at2"/>
<dbReference type="Proteomes" id="UP000001947">
    <property type="component" value="Chromosome"/>
</dbReference>
<dbReference type="GO" id="GO:0005829">
    <property type="term" value="C:cytosol"/>
    <property type="evidence" value="ECO:0007669"/>
    <property type="project" value="TreeGrafter"/>
</dbReference>
<dbReference type="GO" id="GO:0033194">
    <property type="term" value="P:response to hydroperoxide"/>
    <property type="evidence" value="ECO:0007669"/>
    <property type="project" value="TreeGrafter"/>
</dbReference>
<dbReference type="HAMAP" id="MF_00652">
    <property type="entry name" value="UPF0246"/>
    <property type="match status" value="1"/>
</dbReference>
<dbReference type="InterPro" id="IPR005583">
    <property type="entry name" value="YaaA"/>
</dbReference>
<dbReference type="NCBIfam" id="NF002541">
    <property type="entry name" value="PRK02101.1-1"/>
    <property type="match status" value="1"/>
</dbReference>
<dbReference type="NCBIfam" id="NF002542">
    <property type="entry name" value="PRK02101.1-3"/>
    <property type="match status" value="1"/>
</dbReference>
<dbReference type="PANTHER" id="PTHR30283:SF4">
    <property type="entry name" value="PEROXIDE STRESS RESISTANCE PROTEIN YAAA"/>
    <property type="match status" value="1"/>
</dbReference>
<dbReference type="PANTHER" id="PTHR30283">
    <property type="entry name" value="PEROXIDE STRESS RESPONSE PROTEIN YAAA"/>
    <property type="match status" value="1"/>
</dbReference>
<dbReference type="Pfam" id="PF03883">
    <property type="entry name" value="H2O2_YaaD"/>
    <property type="match status" value="1"/>
</dbReference>
<reference key="1">
    <citation type="journal article" date="2008" name="PLoS Genet.">
        <title>Complete genome sequence of the complex carbohydrate-degrading marine bacterium, Saccharophagus degradans strain 2-40 T.</title>
        <authorList>
            <person name="Weiner R.M."/>
            <person name="Taylor L.E. II"/>
            <person name="Henrissat B."/>
            <person name="Hauser L."/>
            <person name="Land M."/>
            <person name="Coutinho P.M."/>
            <person name="Rancurel C."/>
            <person name="Saunders E.H."/>
            <person name="Longmire A.G."/>
            <person name="Zhang H."/>
            <person name="Bayer E.A."/>
            <person name="Gilbert H.J."/>
            <person name="Larimer F."/>
            <person name="Zhulin I.B."/>
            <person name="Ekborg N.A."/>
            <person name="Lamed R."/>
            <person name="Richardson P.M."/>
            <person name="Borovok I."/>
            <person name="Hutcheson S."/>
        </authorList>
    </citation>
    <scope>NUCLEOTIDE SEQUENCE [LARGE SCALE GENOMIC DNA]</scope>
    <source>
        <strain>2-40 / ATCC 43961 / DSM 17024</strain>
    </source>
</reference>
<keyword id="KW-1185">Reference proteome</keyword>
<protein>
    <recommendedName>
        <fullName evidence="1">UPF0246 protein Sde_3824</fullName>
    </recommendedName>
</protein>
<comment type="similarity">
    <text evidence="1">Belongs to the UPF0246 family.</text>
</comment>
<gene>
    <name type="ordered locus">Sde_3824</name>
</gene>